<comment type="function">
    <text evidence="1">Catalyzes the attachment of a first N-acetyl-N-hydroxylysine to a carboxylic group of citric acid to yield N-citryl-N-acetyl-N-hydroxylysine. Involved in the biosynthesis of the siderophore aerobactin which is a chelator that mediates the high-affinity iron transport systems induced under iron-stressed conditions.</text>
</comment>
<comment type="catalytic activity">
    <reaction evidence="1">
        <text>N(6)-acetyl-N(6)-hydroxy-L-lysine + citrate + ATP = N(2)-citryl-N(6)-acetyl-N(6)-hydroxy-L-lysine + AMP + diphosphate + H(+)</text>
        <dbReference type="Rhea" id="RHEA:32163"/>
        <dbReference type="ChEBI" id="CHEBI:15378"/>
        <dbReference type="ChEBI" id="CHEBI:16947"/>
        <dbReference type="ChEBI" id="CHEBI:30616"/>
        <dbReference type="ChEBI" id="CHEBI:33019"/>
        <dbReference type="ChEBI" id="CHEBI:58122"/>
        <dbReference type="ChEBI" id="CHEBI:63796"/>
        <dbReference type="ChEBI" id="CHEBI:456215"/>
        <dbReference type="EC" id="6.3.2.38"/>
    </reaction>
</comment>
<comment type="pathway">
    <text>Siderophore biosynthesis; aerobactin biosynthesis.</text>
</comment>
<comment type="similarity">
    <text evidence="2">Belongs to the IucA/IucC family.</text>
</comment>
<name>IUCA_VIBMI</name>
<gene>
    <name type="primary">iucA</name>
</gene>
<protein>
    <recommendedName>
        <fullName>N(2)-citryl-N(6)-acetyl-N(6)-hydroxylysine synthase</fullName>
        <ecNumber>6.3.2.38</ecNumber>
    </recommendedName>
    <alternativeName>
        <fullName>Aerobactin synthase IucA</fullName>
    </alternativeName>
</protein>
<sequence>MHRNNERINLEKSNDWANTNEPSIACFLNSLARESQSVQLLWGEDGKRVYRLPLANSDSINIPLSYFSSLGSHEYCLPALLHTQDSIKTLSVEQLIEHIVNEPALVGIVSEAKKAIFTKRVLESHRNTEQAIEHSPYQEQLFTEQLDFKTAEQGLLIGHSFHPAPKSREQFSLSDAKLYSPELGGQFKLFWLSVEQSLLTSGSSADIHFNQRFEALVAHDPKLVEALQNAQQQGHELLPVHPWQWHVMVENPSIKGYIATKQIQNLGQLGATWYPTSSTRSLYAPGLPYMLKFSLSVKLTNSIRNLSLKECDSWNDLNDLFQHPQLAQQLGNGRGFQLMQEPAYIGLKDLNGKIIDESLVAFRDNPLMNNPAEEAVVLATLTQQNPYGGSSLVAARIEHYATQQHLSLHQAASLWFDAYCRHAVVPLFHLQANFGIVFLAHQQNIVMQLEQGFPVGMYYRDCQGTGYTDLAFKLFGEQLGDRKEALENYWNQDKVRRYFAYYLIINSTFNLISAICANLDVEESELIEILYHNLNALLQSGVKDDLCLRYVLTSEALCCKGNFFCYLQNFNENSIPDPAVIYFDLPNPLARVEEIAHV</sequence>
<proteinExistence type="evidence at protein level"/>
<feature type="chain" id="PRO_0000418722" description="N(2)-citryl-N(6)-acetyl-N(6)-hydroxylysine synthase">
    <location>
        <begin position="1"/>
        <end position="598"/>
    </location>
</feature>
<evidence type="ECO:0000269" key="1">
    <source>
    </source>
</evidence>
<evidence type="ECO:0000305" key="2"/>
<reference key="1">
    <citation type="journal article" date="2004" name="Microbiol. Immunol.">
        <title>Identification and characterization of two contiguous operons required for aerobactin transport and biosynthesis in Vibrio mimicus.</title>
        <authorList>
            <person name="Moon Y.H."/>
            <person name="Tanabe T."/>
            <person name="Funahashi T."/>
            <person name="Shiuchi K."/>
            <person name="Nakao H."/>
            <person name="Yamamoto S."/>
        </authorList>
    </citation>
    <scope>NUCLEOTIDE SEQUENCE [GENOMIC DNA]</scope>
    <scope>FUNCTION</scope>
    <scope>CATALYTIC ACTIVITY</scope>
    <source>
        <strain>7PT</strain>
    </source>
</reference>
<keyword id="KW-0067">ATP-binding</keyword>
<keyword id="KW-0436">Ligase</keyword>
<keyword id="KW-0547">Nucleotide-binding</keyword>
<keyword id="KW-0808">Transferase</keyword>
<accession>Q76BS7</accession>
<organism>
    <name type="scientific">Vibrio mimicus</name>
    <dbReference type="NCBI Taxonomy" id="674"/>
    <lineage>
        <taxon>Bacteria</taxon>
        <taxon>Pseudomonadati</taxon>
        <taxon>Pseudomonadota</taxon>
        <taxon>Gammaproteobacteria</taxon>
        <taxon>Vibrionales</taxon>
        <taxon>Vibrionaceae</taxon>
        <taxon>Vibrio</taxon>
    </lineage>
</organism>
<dbReference type="EC" id="6.3.2.38"/>
<dbReference type="EMBL" id="AB110784">
    <property type="protein sequence ID" value="BAD02217.1"/>
    <property type="molecule type" value="Genomic_DNA"/>
</dbReference>
<dbReference type="SMR" id="Q76BS7"/>
<dbReference type="STRING" id="674.VM_09610"/>
<dbReference type="eggNOG" id="COG4264">
    <property type="taxonomic scope" value="Bacteria"/>
</dbReference>
<dbReference type="UniPathway" id="UPA00014"/>
<dbReference type="GO" id="GO:0016881">
    <property type="term" value="F:acid-amino acid ligase activity"/>
    <property type="evidence" value="ECO:0007669"/>
    <property type="project" value="UniProtKB-ARBA"/>
</dbReference>
<dbReference type="GO" id="GO:0005524">
    <property type="term" value="F:ATP binding"/>
    <property type="evidence" value="ECO:0007669"/>
    <property type="project" value="UniProtKB-KW"/>
</dbReference>
<dbReference type="GO" id="GO:0016740">
    <property type="term" value="F:transferase activity"/>
    <property type="evidence" value="ECO:0007669"/>
    <property type="project" value="UniProtKB-KW"/>
</dbReference>
<dbReference type="GO" id="GO:0019270">
    <property type="term" value="P:aerobactin biosynthetic process"/>
    <property type="evidence" value="ECO:0007669"/>
    <property type="project" value="UniProtKB-UniPathway"/>
</dbReference>
<dbReference type="GO" id="GO:0019290">
    <property type="term" value="P:siderophore biosynthetic process"/>
    <property type="evidence" value="ECO:0007669"/>
    <property type="project" value="InterPro"/>
</dbReference>
<dbReference type="Gene3D" id="1.10.510.40">
    <property type="match status" value="1"/>
</dbReference>
<dbReference type="Gene3D" id="6.10.250.3370">
    <property type="match status" value="1"/>
</dbReference>
<dbReference type="InterPro" id="IPR007310">
    <property type="entry name" value="Aerobactin_biosyn_IucA/IucC_N"/>
</dbReference>
<dbReference type="InterPro" id="IPR022770">
    <property type="entry name" value="IucA/IucC-like_C"/>
</dbReference>
<dbReference type="InterPro" id="IPR037455">
    <property type="entry name" value="LucA/IucC-like"/>
</dbReference>
<dbReference type="PANTHER" id="PTHR34384">
    <property type="entry name" value="L-2,3-DIAMINOPROPANOATE--CITRATE LIGASE"/>
    <property type="match status" value="1"/>
</dbReference>
<dbReference type="PANTHER" id="PTHR34384:SF5">
    <property type="entry name" value="L-2,3-DIAMINOPROPANOATE--CITRATE LIGASE"/>
    <property type="match status" value="1"/>
</dbReference>
<dbReference type="Pfam" id="PF06276">
    <property type="entry name" value="FhuF"/>
    <property type="match status" value="1"/>
</dbReference>
<dbReference type="Pfam" id="PF04183">
    <property type="entry name" value="IucA_IucC"/>
    <property type="match status" value="1"/>
</dbReference>